<evidence type="ECO:0000250" key="1"/>
<evidence type="ECO:0000255" key="2">
    <source>
        <dbReference type="PROSITE-ProRule" id="PRU00809"/>
    </source>
</evidence>
<evidence type="ECO:0000269" key="3">
    <source>
    </source>
</evidence>
<evidence type="ECO:0000269" key="4">
    <source>
    </source>
</evidence>
<evidence type="ECO:0000269" key="5">
    <source>
    </source>
</evidence>
<reference key="1">
    <citation type="journal article" date="1997" name="FEBS Lett.">
        <title>The 20S proteasome gene family in Arabidopsis thaliana.</title>
        <authorList>
            <person name="Parmentier Y."/>
            <person name="Bouchez D."/>
            <person name="Fleck J."/>
            <person name="Genschik P."/>
        </authorList>
    </citation>
    <scope>NUCLEOTIDE SEQUENCE [MRNA]</scope>
    <source>
        <strain>cv. Columbia</strain>
    </source>
</reference>
<reference key="2">
    <citation type="journal article" date="1998" name="Genetics">
        <title>Molecular organization of the 20S proteasome gene family from Arabidopsis thaliana.</title>
        <authorList>
            <person name="Fu H."/>
            <person name="Doelling J.H."/>
            <person name="Arendt C.S."/>
            <person name="Hochstrasser M."/>
            <person name="Vierstra R.D."/>
        </authorList>
    </citation>
    <scope>NUCLEOTIDE SEQUENCE [MRNA]</scope>
    <scope>GENE FAMILY</scope>
    <scope>NOMENCLATURE</scope>
    <source>
        <strain>cv. Columbia</strain>
    </source>
</reference>
<reference key="3">
    <citation type="journal article" date="2000" name="DNA Res.">
        <title>Structural analysis of Arabidopsis thaliana chromosome 3. II. Sequence features of the 4,251,695 bp regions covered by 90 P1, TAC and BAC clones.</title>
        <authorList>
            <person name="Kaneko T."/>
            <person name="Katoh T."/>
            <person name="Sato S."/>
            <person name="Nakamura Y."/>
            <person name="Asamizu E."/>
            <person name="Tabata S."/>
        </authorList>
    </citation>
    <scope>NUCLEOTIDE SEQUENCE [LARGE SCALE GENOMIC DNA]</scope>
    <source>
        <strain>cv. Columbia</strain>
    </source>
</reference>
<reference key="4">
    <citation type="journal article" date="2017" name="Plant J.">
        <title>Araport11: a complete reannotation of the Arabidopsis thaliana reference genome.</title>
        <authorList>
            <person name="Cheng C.Y."/>
            <person name="Krishnakumar V."/>
            <person name="Chan A.P."/>
            <person name="Thibaud-Nissen F."/>
            <person name="Schobel S."/>
            <person name="Town C.D."/>
        </authorList>
    </citation>
    <scope>GENOME REANNOTATION</scope>
    <source>
        <strain>cv. Columbia</strain>
    </source>
</reference>
<reference key="5">
    <citation type="journal article" date="2003" name="Science">
        <title>Empirical analysis of transcriptional activity in the Arabidopsis genome.</title>
        <authorList>
            <person name="Yamada K."/>
            <person name="Lim J."/>
            <person name="Dale J.M."/>
            <person name="Chen H."/>
            <person name="Shinn P."/>
            <person name="Palm C.J."/>
            <person name="Southwick A.M."/>
            <person name="Wu H.C."/>
            <person name="Kim C.J."/>
            <person name="Nguyen M."/>
            <person name="Pham P.K."/>
            <person name="Cheuk R.F."/>
            <person name="Karlin-Newmann G."/>
            <person name="Liu S.X."/>
            <person name="Lam B."/>
            <person name="Sakano H."/>
            <person name="Wu T."/>
            <person name="Yu G."/>
            <person name="Miranda M."/>
            <person name="Quach H.L."/>
            <person name="Tripp M."/>
            <person name="Chang C.H."/>
            <person name="Lee J.M."/>
            <person name="Toriumi M.J."/>
            <person name="Chan M.M."/>
            <person name="Tang C.C."/>
            <person name="Onodera C.S."/>
            <person name="Deng J.M."/>
            <person name="Akiyama K."/>
            <person name="Ansari Y."/>
            <person name="Arakawa T."/>
            <person name="Banh J."/>
            <person name="Banno F."/>
            <person name="Bowser L."/>
            <person name="Brooks S.Y."/>
            <person name="Carninci P."/>
            <person name="Chao Q."/>
            <person name="Choy N."/>
            <person name="Enju A."/>
            <person name="Goldsmith A.D."/>
            <person name="Gurjal M."/>
            <person name="Hansen N.F."/>
            <person name="Hayashizaki Y."/>
            <person name="Johnson-Hopson C."/>
            <person name="Hsuan V.W."/>
            <person name="Iida K."/>
            <person name="Karnes M."/>
            <person name="Khan S."/>
            <person name="Koesema E."/>
            <person name="Ishida J."/>
            <person name="Jiang P.X."/>
            <person name="Jones T."/>
            <person name="Kawai J."/>
            <person name="Kamiya A."/>
            <person name="Meyers C."/>
            <person name="Nakajima M."/>
            <person name="Narusaka M."/>
            <person name="Seki M."/>
            <person name="Sakurai T."/>
            <person name="Satou M."/>
            <person name="Tamse R."/>
            <person name="Vaysberg M."/>
            <person name="Wallender E.K."/>
            <person name="Wong C."/>
            <person name="Yamamura Y."/>
            <person name="Yuan S."/>
            <person name="Shinozaki K."/>
            <person name="Davis R.W."/>
            <person name="Theologis A."/>
            <person name="Ecker J.R."/>
        </authorList>
    </citation>
    <scope>NUCLEOTIDE SEQUENCE [LARGE SCALE MRNA]</scope>
    <source>
        <strain>cv. Columbia</strain>
    </source>
</reference>
<reference key="6">
    <citation type="journal article" date="1999" name="Mol. Biol. Rep.">
        <title>Structure and functional analyses of the 26S proteasome subunits from plants.</title>
        <authorList>
            <person name="Fu H."/>
            <person name="Girod P.-A."/>
            <person name="Doelling J.H."/>
            <person name="van Nocker S."/>
            <person name="Hochstrasser M."/>
            <person name="Finley D."/>
            <person name="Vierstra R.D."/>
        </authorList>
    </citation>
    <scope>SUBUNIT</scope>
</reference>
<reference key="7">
    <citation type="journal article" date="2004" name="J. Biol. Chem.">
        <title>Purification of the Arabidopsis 26 S proteasome: biochemical and molecular analyses revealed the presence of multiple isoforms.</title>
        <authorList>
            <person name="Yang P."/>
            <person name="Fu H."/>
            <person name="Walker J."/>
            <person name="Papa C.M."/>
            <person name="Smalle J."/>
            <person name="Ju Y.-M."/>
            <person name="Vierstra R.D."/>
        </authorList>
    </citation>
    <scope>SUBUNIT</scope>
    <scope>IDENTIFICATION BY MASS SPECTROMETRY</scope>
</reference>
<reference key="8">
    <citation type="journal article" date="2010" name="J. Biol. Chem.">
        <title>Affinity purification of the Arabidopsis 26 S proteasome reveals a diverse array of plant proteolytic complexes.</title>
        <authorList>
            <person name="Book A.J."/>
            <person name="Gladman N.P."/>
            <person name="Lee S.S."/>
            <person name="Scalf M."/>
            <person name="Smith L.M."/>
            <person name="Vierstra R.D."/>
        </authorList>
    </citation>
    <scope>IDENTIFICATION BY MASS SPECTROMETRY</scope>
    <scope>CHARACTERIZATION OF THE 26S PROTEASOME COMPLEX</scope>
    <scope>SUBUNIT</scope>
    <scope>ACETYLATION AT MET-1</scope>
</reference>
<sequence length="204" mass="22541">MECVFGLVGNGFAIVAADTSAVHSILLHKNNEDKIMVLDSHKLVAASGEPGDRVQFTEYVQKNVSLYKFRNGIPLTTAAAANFTRGELATALRKNPYSVNILMAGYDDESGASLYYIDYIATLHKVDKGAFGYGSYFSLSTMDRHYRSDMSVEEAIELVDKCILEIRSRLVVAPPNFVIKIVDKDGARDYAWRQSVKDVTTAVV</sequence>
<proteinExistence type="evidence at protein level"/>
<gene>
    <name type="primary">PBD1</name>
    <name type="synonym">PRCGB</name>
    <name type="ordered locus">At3g22630</name>
    <name type="ORF">F16J14.18</name>
</gene>
<feature type="chain" id="PRO_0000148049" description="Proteasome subunit beta type-2-A">
    <location>
        <begin position="1"/>
        <end position="204"/>
    </location>
</feature>
<feature type="modified residue" description="N-acetylmethionine" evidence="5">
    <location>
        <position position="1"/>
    </location>
</feature>
<keyword id="KW-0007">Acetylation</keyword>
<keyword id="KW-0963">Cytoplasm</keyword>
<keyword id="KW-0539">Nucleus</keyword>
<keyword id="KW-0647">Proteasome</keyword>
<keyword id="KW-1185">Reference proteome</keyword>
<name>PSB2A_ARATH</name>
<dbReference type="EMBL" id="Y13692">
    <property type="protein sequence ID" value="CAA74026.1"/>
    <property type="molecule type" value="mRNA"/>
</dbReference>
<dbReference type="EMBL" id="AF043534">
    <property type="protein sequence ID" value="AAC32070.1"/>
    <property type="molecule type" value="mRNA"/>
</dbReference>
<dbReference type="EMBL" id="AP000731">
    <property type="protein sequence ID" value="BAB01477.1"/>
    <property type="molecule type" value="Genomic_DNA"/>
</dbReference>
<dbReference type="EMBL" id="CP002686">
    <property type="protein sequence ID" value="AEE76659.1"/>
    <property type="molecule type" value="Genomic_DNA"/>
</dbReference>
<dbReference type="EMBL" id="AY052249">
    <property type="protein sequence ID" value="AAK97719.1"/>
    <property type="molecule type" value="mRNA"/>
</dbReference>
<dbReference type="EMBL" id="AY143817">
    <property type="protein sequence ID" value="AAN28756.1"/>
    <property type="molecule type" value="mRNA"/>
</dbReference>
<dbReference type="PIR" id="T51982">
    <property type="entry name" value="T51982"/>
</dbReference>
<dbReference type="RefSeq" id="NP_188902.1">
    <property type="nucleotide sequence ID" value="NM_113162.3"/>
</dbReference>
<dbReference type="SMR" id="O23714"/>
<dbReference type="BioGRID" id="7166">
    <property type="interactions" value="53"/>
</dbReference>
<dbReference type="FunCoup" id="O23714">
    <property type="interactions" value="4125"/>
</dbReference>
<dbReference type="IntAct" id="O23714">
    <property type="interactions" value="2"/>
</dbReference>
<dbReference type="STRING" id="3702.O23714"/>
<dbReference type="MEROPS" id="T01.984"/>
<dbReference type="iPTMnet" id="O23714"/>
<dbReference type="MetOSite" id="O23714"/>
<dbReference type="PaxDb" id="3702-AT3G22630.1"/>
<dbReference type="ProteomicsDB" id="248623"/>
<dbReference type="EnsemblPlants" id="AT3G22630.1">
    <property type="protein sequence ID" value="AT3G22630.1"/>
    <property type="gene ID" value="AT3G22630"/>
</dbReference>
<dbReference type="GeneID" id="821834"/>
<dbReference type="Gramene" id="AT3G22630.1">
    <property type="protein sequence ID" value="AT3G22630.1"/>
    <property type="gene ID" value="AT3G22630"/>
</dbReference>
<dbReference type="KEGG" id="ath:AT3G22630"/>
<dbReference type="Araport" id="AT3G22630"/>
<dbReference type="TAIR" id="AT3G22630">
    <property type="gene designation" value="PBD1"/>
</dbReference>
<dbReference type="eggNOG" id="KOG0177">
    <property type="taxonomic scope" value="Eukaryota"/>
</dbReference>
<dbReference type="HOGENOM" id="CLU_035750_12_1_1"/>
<dbReference type="InParanoid" id="O23714"/>
<dbReference type="OMA" id="GDWTKRN"/>
<dbReference type="OrthoDB" id="268428at2759"/>
<dbReference type="PhylomeDB" id="O23714"/>
<dbReference type="PRO" id="PR:O23714"/>
<dbReference type="Proteomes" id="UP000006548">
    <property type="component" value="Chromosome 3"/>
</dbReference>
<dbReference type="ExpressionAtlas" id="O23714">
    <property type="expression patterns" value="baseline and differential"/>
</dbReference>
<dbReference type="GO" id="GO:0048046">
    <property type="term" value="C:apoplast"/>
    <property type="evidence" value="ECO:0007005"/>
    <property type="project" value="TAIR"/>
</dbReference>
<dbReference type="GO" id="GO:0005829">
    <property type="term" value="C:cytosol"/>
    <property type="evidence" value="ECO:0007005"/>
    <property type="project" value="TAIR"/>
</dbReference>
<dbReference type="GO" id="GO:0005634">
    <property type="term" value="C:nucleus"/>
    <property type="evidence" value="ECO:0007669"/>
    <property type="project" value="UniProtKB-SubCell"/>
</dbReference>
<dbReference type="GO" id="GO:0000325">
    <property type="term" value="C:plant-type vacuole"/>
    <property type="evidence" value="ECO:0007005"/>
    <property type="project" value="TAIR"/>
</dbReference>
<dbReference type="GO" id="GO:0000502">
    <property type="term" value="C:proteasome complex"/>
    <property type="evidence" value="ECO:0000314"/>
    <property type="project" value="TAIR"/>
</dbReference>
<dbReference type="GO" id="GO:0019774">
    <property type="term" value="C:proteasome core complex, beta-subunit complex"/>
    <property type="evidence" value="ECO:0000250"/>
    <property type="project" value="UniProtKB"/>
</dbReference>
<dbReference type="GO" id="GO:0099503">
    <property type="term" value="C:secretory vesicle"/>
    <property type="evidence" value="ECO:0007005"/>
    <property type="project" value="TAIR"/>
</dbReference>
<dbReference type="GO" id="GO:0005773">
    <property type="term" value="C:vacuole"/>
    <property type="evidence" value="ECO:0007005"/>
    <property type="project" value="TAIR"/>
</dbReference>
<dbReference type="GO" id="GO:0010498">
    <property type="term" value="P:proteasomal protein catabolic process"/>
    <property type="evidence" value="ECO:0007669"/>
    <property type="project" value="InterPro"/>
</dbReference>
<dbReference type="CDD" id="cd03758">
    <property type="entry name" value="proteasome_beta_type_2"/>
    <property type="match status" value="1"/>
</dbReference>
<dbReference type="FunFam" id="3.60.20.10:FF:000008">
    <property type="entry name" value="Proteasome subunit beta type-4"/>
    <property type="match status" value="1"/>
</dbReference>
<dbReference type="Gene3D" id="3.60.20.10">
    <property type="entry name" value="Glutamine Phosphoribosylpyrophosphate, subunit 1, domain 1"/>
    <property type="match status" value="1"/>
</dbReference>
<dbReference type="InterPro" id="IPR029055">
    <property type="entry name" value="Ntn_hydrolases_N"/>
</dbReference>
<dbReference type="InterPro" id="IPR050115">
    <property type="entry name" value="Proteasome_alpha"/>
</dbReference>
<dbReference type="InterPro" id="IPR035206">
    <property type="entry name" value="Proteasome_beta2"/>
</dbReference>
<dbReference type="InterPro" id="IPR016050">
    <property type="entry name" value="Proteasome_bsu_CS"/>
</dbReference>
<dbReference type="InterPro" id="IPR001353">
    <property type="entry name" value="Proteasome_sua/b"/>
</dbReference>
<dbReference type="InterPro" id="IPR023333">
    <property type="entry name" value="Proteasome_suB-type"/>
</dbReference>
<dbReference type="PANTHER" id="PTHR11599">
    <property type="entry name" value="PROTEASOME SUBUNIT ALPHA/BETA"/>
    <property type="match status" value="1"/>
</dbReference>
<dbReference type="Pfam" id="PF00227">
    <property type="entry name" value="Proteasome"/>
    <property type="match status" value="1"/>
</dbReference>
<dbReference type="SUPFAM" id="SSF56235">
    <property type="entry name" value="N-terminal nucleophile aminohydrolases (Ntn hydrolases)"/>
    <property type="match status" value="1"/>
</dbReference>
<dbReference type="PROSITE" id="PS00854">
    <property type="entry name" value="PROTEASOME_BETA_1"/>
    <property type="match status" value="1"/>
</dbReference>
<dbReference type="PROSITE" id="PS51476">
    <property type="entry name" value="PROTEASOME_BETA_2"/>
    <property type="match status" value="1"/>
</dbReference>
<organism>
    <name type="scientific">Arabidopsis thaliana</name>
    <name type="common">Mouse-ear cress</name>
    <dbReference type="NCBI Taxonomy" id="3702"/>
    <lineage>
        <taxon>Eukaryota</taxon>
        <taxon>Viridiplantae</taxon>
        <taxon>Streptophyta</taxon>
        <taxon>Embryophyta</taxon>
        <taxon>Tracheophyta</taxon>
        <taxon>Spermatophyta</taxon>
        <taxon>Magnoliopsida</taxon>
        <taxon>eudicotyledons</taxon>
        <taxon>Gunneridae</taxon>
        <taxon>Pentapetalae</taxon>
        <taxon>rosids</taxon>
        <taxon>malvids</taxon>
        <taxon>Brassicales</taxon>
        <taxon>Brassicaceae</taxon>
        <taxon>Camelineae</taxon>
        <taxon>Arabidopsis</taxon>
    </lineage>
</organism>
<comment type="function">
    <text>Non-catalytic component of the proteasome, a multicatalytic proteinase complex which is characterized by its ability to cleave peptides with Arg, Phe, Tyr, Leu, and Glu adjacent to the leaving group at neutral or slightly basic pH. The proteasome has an ATP-dependent proteolytic activity.</text>
</comment>
<comment type="subunit">
    <text evidence="3 4 5">Component of the 20S core complex of the 26S proteasome. The 26S proteasome is composed of a core protease (CP), known as the 20S proteasome, capped at one or both ends by the 19S regulatory particle (RP/PA700). The 20S proteasome core is composed of 28 subunits that are arranged in four stacked rings, resulting in a barrel-shaped structure. The two end rings are each formed by seven alpha subunits, and the two central rings are each formed by seven beta subunits. The catalytic chamber with the active sites is on the inside of the barrel.</text>
</comment>
<comment type="subcellular location">
    <subcellularLocation>
        <location evidence="2">Cytoplasm</location>
    </subcellularLocation>
    <subcellularLocation>
        <location evidence="1">Nucleus</location>
    </subcellularLocation>
</comment>
<comment type="similarity">
    <text evidence="2">Belongs to the peptidase T1B family.</text>
</comment>
<accession>O23714</accession>
<protein>
    <recommendedName>
        <fullName>Proteasome subunit beta type-2-A</fullName>
    </recommendedName>
    <alternativeName>
        <fullName>20S proteasome beta subunit D-1</fullName>
    </alternativeName>
    <alternativeName>
        <fullName>Proteasome component GB</fullName>
    </alternativeName>
    <alternativeName>
        <fullName>Proteasome subunit beta type-4</fullName>
    </alternativeName>
</protein>